<accession>Q3K004</accession>
<reference key="1">
    <citation type="journal article" date="2005" name="Proc. Natl. Acad. Sci. U.S.A.">
        <title>Genome analysis of multiple pathogenic isolates of Streptococcus agalactiae: implications for the microbial 'pan-genome'.</title>
        <authorList>
            <person name="Tettelin H."/>
            <person name="Masignani V."/>
            <person name="Cieslewicz M.J."/>
            <person name="Donati C."/>
            <person name="Medini D."/>
            <person name="Ward N.L."/>
            <person name="Angiuoli S.V."/>
            <person name="Crabtree J."/>
            <person name="Jones A.L."/>
            <person name="Durkin A.S."/>
            <person name="DeBoy R.T."/>
            <person name="Davidsen T.M."/>
            <person name="Mora M."/>
            <person name="Scarselli M."/>
            <person name="Margarit y Ros I."/>
            <person name="Peterson J.D."/>
            <person name="Hauser C.R."/>
            <person name="Sundaram J.P."/>
            <person name="Nelson W.C."/>
            <person name="Madupu R."/>
            <person name="Brinkac L.M."/>
            <person name="Dodson R.J."/>
            <person name="Rosovitz M.J."/>
            <person name="Sullivan S.A."/>
            <person name="Daugherty S.C."/>
            <person name="Haft D.H."/>
            <person name="Selengut J."/>
            <person name="Gwinn M.L."/>
            <person name="Zhou L."/>
            <person name="Zafar N."/>
            <person name="Khouri H."/>
            <person name="Radune D."/>
            <person name="Dimitrov G."/>
            <person name="Watkins K."/>
            <person name="O'Connor K.J."/>
            <person name="Smith S."/>
            <person name="Utterback T.R."/>
            <person name="White O."/>
            <person name="Rubens C.E."/>
            <person name="Grandi G."/>
            <person name="Madoff L.C."/>
            <person name="Kasper D.L."/>
            <person name="Telford J.L."/>
            <person name="Wessels M.R."/>
            <person name="Rappuoli R."/>
            <person name="Fraser C.M."/>
        </authorList>
    </citation>
    <scope>NUCLEOTIDE SEQUENCE [LARGE SCALE GENOMIC DNA]</scope>
    <source>
        <strain>ATCC 27591 / A909 / CDC SS700</strain>
    </source>
</reference>
<comment type="function">
    <text evidence="1">Binds directly to 23S rRNA. The L1 stalk is quite mobile in the ribosome, and is involved in E site tRNA release.</text>
</comment>
<comment type="function">
    <text evidence="1">Protein L1 is also a translational repressor protein, it controls the translation of the L11 operon by binding to its mRNA.</text>
</comment>
<comment type="subunit">
    <text evidence="1">Part of the 50S ribosomal subunit.</text>
</comment>
<comment type="similarity">
    <text evidence="1">Belongs to the universal ribosomal protein uL1 family.</text>
</comment>
<keyword id="KW-0678">Repressor</keyword>
<keyword id="KW-0687">Ribonucleoprotein</keyword>
<keyword id="KW-0689">Ribosomal protein</keyword>
<keyword id="KW-0694">RNA-binding</keyword>
<keyword id="KW-0699">rRNA-binding</keyword>
<keyword id="KW-0810">Translation regulation</keyword>
<keyword id="KW-0820">tRNA-binding</keyword>
<protein>
    <recommendedName>
        <fullName evidence="1">Large ribosomal subunit protein uL1</fullName>
    </recommendedName>
    <alternativeName>
        <fullName evidence="2">50S ribosomal protein L1</fullName>
    </alternativeName>
</protein>
<proteinExistence type="inferred from homology"/>
<gene>
    <name evidence="1" type="primary">rplA</name>
    <name type="ordered locus">SAK_1543</name>
</gene>
<dbReference type="EMBL" id="CP000114">
    <property type="protein sequence ID" value="ABA44842.1"/>
    <property type="molecule type" value="Genomic_DNA"/>
</dbReference>
<dbReference type="RefSeq" id="WP_001085664.1">
    <property type="nucleotide sequence ID" value="NC_007432.1"/>
</dbReference>
<dbReference type="SMR" id="Q3K004"/>
<dbReference type="GeneID" id="66886374"/>
<dbReference type="KEGG" id="sak:SAK_1543"/>
<dbReference type="HOGENOM" id="CLU_062853_0_0_9"/>
<dbReference type="GO" id="GO:0015934">
    <property type="term" value="C:large ribosomal subunit"/>
    <property type="evidence" value="ECO:0007669"/>
    <property type="project" value="InterPro"/>
</dbReference>
<dbReference type="GO" id="GO:0019843">
    <property type="term" value="F:rRNA binding"/>
    <property type="evidence" value="ECO:0007669"/>
    <property type="project" value="UniProtKB-UniRule"/>
</dbReference>
<dbReference type="GO" id="GO:0003735">
    <property type="term" value="F:structural constituent of ribosome"/>
    <property type="evidence" value="ECO:0007669"/>
    <property type="project" value="InterPro"/>
</dbReference>
<dbReference type="GO" id="GO:0000049">
    <property type="term" value="F:tRNA binding"/>
    <property type="evidence" value="ECO:0007669"/>
    <property type="project" value="UniProtKB-KW"/>
</dbReference>
<dbReference type="GO" id="GO:0006417">
    <property type="term" value="P:regulation of translation"/>
    <property type="evidence" value="ECO:0007669"/>
    <property type="project" value="UniProtKB-KW"/>
</dbReference>
<dbReference type="GO" id="GO:0006412">
    <property type="term" value="P:translation"/>
    <property type="evidence" value="ECO:0007669"/>
    <property type="project" value="UniProtKB-UniRule"/>
</dbReference>
<dbReference type="CDD" id="cd00403">
    <property type="entry name" value="Ribosomal_L1"/>
    <property type="match status" value="1"/>
</dbReference>
<dbReference type="FunFam" id="3.40.50.790:FF:000001">
    <property type="entry name" value="50S ribosomal protein L1"/>
    <property type="match status" value="1"/>
</dbReference>
<dbReference type="Gene3D" id="3.30.190.20">
    <property type="match status" value="1"/>
</dbReference>
<dbReference type="Gene3D" id="3.40.50.790">
    <property type="match status" value="1"/>
</dbReference>
<dbReference type="HAMAP" id="MF_01318_B">
    <property type="entry name" value="Ribosomal_uL1_B"/>
    <property type="match status" value="1"/>
</dbReference>
<dbReference type="InterPro" id="IPR005878">
    <property type="entry name" value="Ribosom_uL1_bac-type"/>
</dbReference>
<dbReference type="InterPro" id="IPR002143">
    <property type="entry name" value="Ribosomal_uL1"/>
</dbReference>
<dbReference type="InterPro" id="IPR023674">
    <property type="entry name" value="Ribosomal_uL1-like"/>
</dbReference>
<dbReference type="InterPro" id="IPR028364">
    <property type="entry name" value="Ribosomal_uL1/biogenesis"/>
</dbReference>
<dbReference type="InterPro" id="IPR016095">
    <property type="entry name" value="Ribosomal_uL1_3-a/b-sand"/>
</dbReference>
<dbReference type="InterPro" id="IPR023673">
    <property type="entry name" value="Ribosomal_uL1_CS"/>
</dbReference>
<dbReference type="NCBIfam" id="TIGR01169">
    <property type="entry name" value="rplA_bact"/>
    <property type="match status" value="1"/>
</dbReference>
<dbReference type="PANTHER" id="PTHR36427">
    <property type="entry name" value="54S RIBOSOMAL PROTEIN L1, MITOCHONDRIAL"/>
    <property type="match status" value="1"/>
</dbReference>
<dbReference type="PANTHER" id="PTHR36427:SF3">
    <property type="entry name" value="LARGE RIBOSOMAL SUBUNIT PROTEIN UL1M"/>
    <property type="match status" value="1"/>
</dbReference>
<dbReference type="Pfam" id="PF00687">
    <property type="entry name" value="Ribosomal_L1"/>
    <property type="match status" value="1"/>
</dbReference>
<dbReference type="PIRSF" id="PIRSF002155">
    <property type="entry name" value="Ribosomal_L1"/>
    <property type="match status" value="1"/>
</dbReference>
<dbReference type="SUPFAM" id="SSF56808">
    <property type="entry name" value="Ribosomal protein L1"/>
    <property type="match status" value="1"/>
</dbReference>
<dbReference type="PROSITE" id="PS01199">
    <property type="entry name" value="RIBOSOMAL_L1"/>
    <property type="match status" value="1"/>
</dbReference>
<sequence length="229" mass="24293">MAKKSKNLRAALEKIDSTKAYSVEEAVALAKETNFAKFDATVEVSYNLNIDVKKADQQIRGAMVLPAGTGKTSRVLVFARGAKAEEAKAAGADFVGEDDLVAKIQGGWLDFDVVIATPDMMALVGRLGRVLGPRNLMPNPKTGTVTMDVAKAVEESKGGKITYRADKAGNVQALIGKVSFDDAKLVDNFKAFNDVIVKAKPATAKGTYITNLSITTTQGVGIKVDPNSL</sequence>
<evidence type="ECO:0000255" key="1">
    <source>
        <dbReference type="HAMAP-Rule" id="MF_01318"/>
    </source>
</evidence>
<evidence type="ECO:0000305" key="2"/>
<name>RL1_STRA1</name>
<organism>
    <name type="scientific">Streptococcus agalactiae serotype Ia (strain ATCC 27591 / A909 / CDC SS700)</name>
    <dbReference type="NCBI Taxonomy" id="205921"/>
    <lineage>
        <taxon>Bacteria</taxon>
        <taxon>Bacillati</taxon>
        <taxon>Bacillota</taxon>
        <taxon>Bacilli</taxon>
        <taxon>Lactobacillales</taxon>
        <taxon>Streptococcaceae</taxon>
        <taxon>Streptococcus</taxon>
    </lineage>
</organism>
<feature type="chain" id="PRO_0000230642" description="Large ribosomal subunit protein uL1">
    <location>
        <begin position="1"/>
        <end position="229"/>
    </location>
</feature>